<keyword id="KW-0963">Cytoplasm</keyword>
<keyword id="KW-0251">Elongation factor</keyword>
<keyword id="KW-0342">GTP-binding</keyword>
<keyword id="KW-0547">Nucleotide-binding</keyword>
<keyword id="KW-0648">Protein biosynthesis</keyword>
<name>EF2_METMJ</name>
<gene>
    <name evidence="1" type="primary">fusA</name>
    <name type="ordered locus">Memar_2205</name>
</gene>
<dbReference type="EMBL" id="CP000562">
    <property type="protein sequence ID" value="ABN58128.1"/>
    <property type="molecule type" value="Genomic_DNA"/>
</dbReference>
<dbReference type="RefSeq" id="WP_011845037.1">
    <property type="nucleotide sequence ID" value="NC_009051.1"/>
</dbReference>
<dbReference type="SMR" id="A3CXM8"/>
<dbReference type="STRING" id="368407.Memar_2205"/>
<dbReference type="GeneID" id="4846152"/>
<dbReference type="KEGG" id="mem:Memar_2205"/>
<dbReference type="eggNOG" id="arCOG01559">
    <property type="taxonomic scope" value="Archaea"/>
</dbReference>
<dbReference type="HOGENOM" id="CLU_002794_11_1_2"/>
<dbReference type="OrthoDB" id="6290at2157"/>
<dbReference type="Proteomes" id="UP000002146">
    <property type="component" value="Chromosome"/>
</dbReference>
<dbReference type="GO" id="GO:0005829">
    <property type="term" value="C:cytosol"/>
    <property type="evidence" value="ECO:0007669"/>
    <property type="project" value="TreeGrafter"/>
</dbReference>
<dbReference type="GO" id="GO:1990904">
    <property type="term" value="C:ribonucleoprotein complex"/>
    <property type="evidence" value="ECO:0007669"/>
    <property type="project" value="TreeGrafter"/>
</dbReference>
<dbReference type="GO" id="GO:0005525">
    <property type="term" value="F:GTP binding"/>
    <property type="evidence" value="ECO:0007669"/>
    <property type="project" value="UniProtKB-UniRule"/>
</dbReference>
<dbReference type="GO" id="GO:0003924">
    <property type="term" value="F:GTPase activity"/>
    <property type="evidence" value="ECO:0007669"/>
    <property type="project" value="InterPro"/>
</dbReference>
<dbReference type="GO" id="GO:0003746">
    <property type="term" value="F:translation elongation factor activity"/>
    <property type="evidence" value="ECO:0007669"/>
    <property type="project" value="UniProtKB-UniRule"/>
</dbReference>
<dbReference type="CDD" id="cd01681">
    <property type="entry name" value="aeEF2_snRNP_like_IV"/>
    <property type="match status" value="1"/>
</dbReference>
<dbReference type="CDD" id="cd16268">
    <property type="entry name" value="EF2_II"/>
    <property type="match status" value="1"/>
</dbReference>
<dbReference type="CDD" id="cd16261">
    <property type="entry name" value="EF2_snRNP_III"/>
    <property type="match status" value="1"/>
</dbReference>
<dbReference type="CDD" id="cd01514">
    <property type="entry name" value="Elongation_Factor_C"/>
    <property type="match status" value="1"/>
</dbReference>
<dbReference type="FunFam" id="3.30.70.240:FF:000010">
    <property type="entry name" value="Elongation factor 2"/>
    <property type="match status" value="1"/>
</dbReference>
<dbReference type="FunFam" id="3.40.50.300:FF:000684">
    <property type="entry name" value="Elongation factor 2"/>
    <property type="match status" value="1"/>
</dbReference>
<dbReference type="FunFam" id="3.30.70.870:FF:000002">
    <property type="entry name" value="Translation elongation factor 2"/>
    <property type="match status" value="1"/>
</dbReference>
<dbReference type="Gene3D" id="3.30.230.10">
    <property type="match status" value="1"/>
</dbReference>
<dbReference type="Gene3D" id="3.30.70.240">
    <property type="match status" value="1"/>
</dbReference>
<dbReference type="Gene3D" id="3.30.70.870">
    <property type="entry name" value="Elongation Factor G (Translational Gtpase), domain 3"/>
    <property type="match status" value="1"/>
</dbReference>
<dbReference type="Gene3D" id="3.40.50.300">
    <property type="entry name" value="P-loop containing nucleotide triphosphate hydrolases"/>
    <property type="match status" value="1"/>
</dbReference>
<dbReference type="Gene3D" id="2.40.30.10">
    <property type="entry name" value="Translation factors"/>
    <property type="match status" value="1"/>
</dbReference>
<dbReference type="HAMAP" id="MF_00054_A">
    <property type="entry name" value="EF_G_EF_2_A"/>
    <property type="match status" value="1"/>
</dbReference>
<dbReference type="InterPro" id="IPR041095">
    <property type="entry name" value="EFG_II"/>
</dbReference>
<dbReference type="InterPro" id="IPR035647">
    <property type="entry name" value="EFG_III/V"/>
</dbReference>
<dbReference type="InterPro" id="IPR000640">
    <property type="entry name" value="EFG_V-like"/>
</dbReference>
<dbReference type="InterPro" id="IPR004161">
    <property type="entry name" value="EFTu-like_2"/>
</dbReference>
<dbReference type="InterPro" id="IPR031157">
    <property type="entry name" value="G_TR_CS"/>
</dbReference>
<dbReference type="InterPro" id="IPR027417">
    <property type="entry name" value="P-loop_NTPase"/>
</dbReference>
<dbReference type="InterPro" id="IPR020568">
    <property type="entry name" value="Ribosomal_Su5_D2-typ_SF"/>
</dbReference>
<dbReference type="InterPro" id="IPR014721">
    <property type="entry name" value="Ribsml_uS5_D2-typ_fold_subgr"/>
</dbReference>
<dbReference type="InterPro" id="IPR005225">
    <property type="entry name" value="Small_GTP-bd"/>
</dbReference>
<dbReference type="InterPro" id="IPR000795">
    <property type="entry name" value="T_Tr_GTP-bd_dom"/>
</dbReference>
<dbReference type="InterPro" id="IPR009000">
    <property type="entry name" value="Transl_B-barrel_sf"/>
</dbReference>
<dbReference type="InterPro" id="IPR004543">
    <property type="entry name" value="Transl_elong_EFG/EF2_arc"/>
</dbReference>
<dbReference type="InterPro" id="IPR005517">
    <property type="entry name" value="Transl_elong_EFG/EF2_IV"/>
</dbReference>
<dbReference type="NCBIfam" id="TIGR00490">
    <property type="entry name" value="aEF-2"/>
    <property type="match status" value="1"/>
</dbReference>
<dbReference type="NCBIfam" id="TIGR00231">
    <property type="entry name" value="small_GTP"/>
    <property type="match status" value="1"/>
</dbReference>
<dbReference type="PANTHER" id="PTHR42908:SF3">
    <property type="entry name" value="ELONGATION FACTOR-LIKE GTPASE 1"/>
    <property type="match status" value="1"/>
</dbReference>
<dbReference type="PANTHER" id="PTHR42908">
    <property type="entry name" value="TRANSLATION ELONGATION FACTOR-RELATED"/>
    <property type="match status" value="1"/>
</dbReference>
<dbReference type="Pfam" id="PF00679">
    <property type="entry name" value="EFG_C"/>
    <property type="match status" value="1"/>
</dbReference>
<dbReference type="Pfam" id="PF14492">
    <property type="entry name" value="EFG_III"/>
    <property type="match status" value="1"/>
</dbReference>
<dbReference type="Pfam" id="PF03764">
    <property type="entry name" value="EFG_IV"/>
    <property type="match status" value="1"/>
</dbReference>
<dbReference type="Pfam" id="PF00009">
    <property type="entry name" value="GTP_EFTU"/>
    <property type="match status" value="1"/>
</dbReference>
<dbReference type="Pfam" id="PF03144">
    <property type="entry name" value="GTP_EFTU_D2"/>
    <property type="match status" value="1"/>
</dbReference>
<dbReference type="PRINTS" id="PR00315">
    <property type="entry name" value="ELONGATNFCT"/>
</dbReference>
<dbReference type="SMART" id="SM00838">
    <property type="entry name" value="EFG_C"/>
    <property type="match status" value="1"/>
</dbReference>
<dbReference type="SMART" id="SM00889">
    <property type="entry name" value="EFG_IV"/>
    <property type="match status" value="1"/>
</dbReference>
<dbReference type="SUPFAM" id="SSF54980">
    <property type="entry name" value="EF-G C-terminal domain-like"/>
    <property type="match status" value="2"/>
</dbReference>
<dbReference type="SUPFAM" id="SSF52540">
    <property type="entry name" value="P-loop containing nucleoside triphosphate hydrolases"/>
    <property type="match status" value="1"/>
</dbReference>
<dbReference type="SUPFAM" id="SSF54211">
    <property type="entry name" value="Ribosomal protein S5 domain 2-like"/>
    <property type="match status" value="1"/>
</dbReference>
<dbReference type="SUPFAM" id="SSF50447">
    <property type="entry name" value="Translation proteins"/>
    <property type="match status" value="1"/>
</dbReference>
<dbReference type="PROSITE" id="PS00301">
    <property type="entry name" value="G_TR_1"/>
    <property type="match status" value="1"/>
</dbReference>
<dbReference type="PROSITE" id="PS51722">
    <property type="entry name" value="G_TR_2"/>
    <property type="match status" value="1"/>
</dbReference>
<reference key="1">
    <citation type="journal article" date="2009" name="Stand. Genomic Sci.">
        <title>Complete genome sequence of Methanoculleus marisnigri Romesser et al. 1981 type strain JR1.</title>
        <authorList>
            <person name="Anderson I.J."/>
            <person name="Sieprawska-Lupa M."/>
            <person name="Lapidus A."/>
            <person name="Nolan M."/>
            <person name="Copeland A."/>
            <person name="Glavina Del Rio T."/>
            <person name="Tice H."/>
            <person name="Dalin E."/>
            <person name="Barry K."/>
            <person name="Saunders E."/>
            <person name="Han C."/>
            <person name="Brettin T."/>
            <person name="Detter J.C."/>
            <person name="Bruce D."/>
            <person name="Mikhailova N."/>
            <person name="Pitluck S."/>
            <person name="Hauser L."/>
            <person name="Land M."/>
            <person name="Lucas S."/>
            <person name="Richardson P."/>
            <person name="Whitman W.B."/>
            <person name="Kyrpides N.C."/>
        </authorList>
    </citation>
    <scope>NUCLEOTIDE SEQUENCE [LARGE SCALE GENOMIC DNA]</scope>
    <source>
        <strain>ATCC 35101 / DSM 1498 / JR1</strain>
    </source>
</reference>
<evidence type="ECO:0000255" key="1">
    <source>
        <dbReference type="HAMAP-Rule" id="MF_00054"/>
    </source>
</evidence>
<feature type="chain" id="PRO_1000008848" description="Elongation factor 2">
    <location>
        <begin position="1"/>
        <end position="730"/>
    </location>
</feature>
<feature type="domain" description="tr-type G">
    <location>
        <begin position="19"/>
        <end position="260"/>
    </location>
</feature>
<feature type="binding site" evidence="1">
    <location>
        <begin position="28"/>
        <end position="35"/>
    </location>
    <ligand>
        <name>GTP</name>
        <dbReference type="ChEBI" id="CHEBI:37565"/>
    </ligand>
</feature>
<feature type="binding site" evidence="1">
    <location>
        <begin position="94"/>
        <end position="98"/>
    </location>
    <ligand>
        <name>GTP</name>
        <dbReference type="ChEBI" id="CHEBI:37565"/>
    </ligand>
</feature>
<feature type="binding site" evidence="1">
    <location>
        <begin position="148"/>
        <end position="151"/>
    </location>
    <ligand>
        <name>GTP</name>
        <dbReference type="ChEBI" id="CHEBI:37565"/>
    </ligand>
</feature>
<feature type="modified residue" description="Diphthamide" evidence="1">
    <location>
        <position position="597"/>
    </location>
</feature>
<accession>A3CXM8</accession>
<protein>
    <recommendedName>
        <fullName evidence="1">Elongation factor 2</fullName>
        <shortName evidence="1">EF-2</shortName>
    </recommendedName>
</protein>
<organism>
    <name type="scientific">Methanoculleus marisnigri (strain ATCC 35101 / DSM 1498 / JR1)</name>
    <dbReference type="NCBI Taxonomy" id="368407"/>
    <lineage>
        <taxon>Archaea</taxon>
        <taxon>Methanobacteriati</taxon>
        <taxon>Methanobacteriota</taxon>
        <taxon>Stenosarchaea group</taxon>
        <taxon>Methanomicrobia</taxon>
        <taxon>Methanomicrobiales</taxon>
        <taxon>Methanomicrobiaceae</taxon>
        <taxon>Methanoculleus</taxon>
    </lineage>
</organism>
<comment type="function">
    <text evidence="1">Catalyzes the GTP-dependent ribosomal translocation step during translation elongation. During this step, the ribosome changes from the pre-translocational (PRE) to the post-translocational (POST) state as the newly formed A-site-bound peptidyl-tRNA and P-site-bound deacylated tRNA move to the P and E sites, respectively. Catalyzes the coordinated movement of the two tRNA molecules, the mRNA and conformational changes in the ribosome.</text>
</comment>
<comment type="subcellular location">
    <subcellularLocation>
        <location evidence="1">Cytoplasm</location>
    </subcellularLocation>
</comment>
<comment type="similarity">
    <text evidence="1">Belongs to the TRAFAC class translation factor GTPase superfamily. Classic translation factor GTPase family. EF-G/EF-2 subfamily.</text>
</comment>
<proteinExistence type="inferred from homology"/>
<sequence length="730" mass="80119">MTRRKKMVERVTELMDKPDRIRNIGIVAHIDHGKTTLSDNLLAGAGMISEELAGRQLFMDSDEEEQARGITIDASNVSMVHTYGGEEYLINMIDTPGHVDFGGDVTRAMRAVDGAVVVVDAVEGTMPQTETVLRQALKEGVRPVLFINKVDRLVNELKVDEQEMQIRLAKVIDKVNKLIKGMNEKMYNDGWKLDAAKGTVAFGSALYNWAVSVPFMKSSGVSFKDVFEKCNAGDMKWLSKNSPLHAVLLDMVVKHLPNPLQAQDRRIHIIWHGDYNTPEGKAMVACDPNGPVCMMVTDISFDPHAGEVATGRLFSGTLRRGTECYIIGAAKRANRLAQVGIFMGAERIEVEALPAGNIAAVTGLKDAIVGSTVTSLIEMTPFESLKHYSEPVMTVAVEAKSMKDLPKLVEVLRQIAKEDPTVQVSINEETGEHLISGMGELHLEIITGRIKRDKGVDILTSPPIVVYRETITGSVGPVEGKSPNRHNRFYIELEPMDPAIVKMILDGEISMNQQAIERRDALVAAGMDKDEAKNVKAIEATNMFIDMTKGIQYLNETMELVLDGWREALRGGPLADELVQNLKIRLVDVKLHEDAIHRGPAQVIPAVRSAVKAGVLMAGDSLLEPIQKIQITVPSEQMGAATSQIQGRRGQVFDMLSEGDTMTIVGKAPVAELFGFAGDIRSATEGRAMWSTEFAGFELVPAGIVNDVVKDIRKRKGLKEQIPRPDDYLA</sequence>